<sequence length="140" mass="15473">MLKTISPLISPELLKVLAEMGHGDEIIFSDAHFPAHSMGPQVIRADGLLVSDLLQAIIPLFELDSYAPPLVMMAAVEGDTLDPEVERRYRNALSLQAPCPDIIRINRFAFYERAQKAFAIVITGERAKYGNILLKKGVTP</sequence>
<protein>
    <recommendedName>
        <fullName evidence="1">L-fucose mutarotase</fullName>
        <ecNumber evidence="1">5.1.3.29</ecNumber>
    </recommendedName>
    <alternativeName>
        <fullName evidence="1">Fucose 1-epimerase</fullName>
    </alternativeName>
    <alternativeName>
        <fullName evidence="1">Type-2 mutarotase</fullName>
    </alternativeName>
</protein>
<accession>B7UHM0</accession>
<comment type="function">
    <text evidence="1">Involved in the anomeric conversion of L-fucose.</text>
</comment>
<comment type="catalytic activity">
    <reaction evidence="1">
        <text>alpha-L-fucose = beta-L-fucose</text>
        <dbReference type="Rhea" id="RHEA:25580"/>
        <dbReference type="ChEBI" id="CHEBI:42548"/>
        <dbReference type="ChEBI" id="CHEBI:42589"/>
        <dbReference type="EC" id="5.1.3.29"/>
    </reaction>
</comment>
<comment type="pathway">
    <text evidence="1">Carbohydrate metabolism; L-fucose metabolism.</text>
</comment>
<comment type="subunit">
    <text evidence="1">Homodecamer.</text>
</comment>
<comment type="subcellular location">
    <subcellularLocation>
        <location evidence="1">Cytoplasm</location>
    </subcellularLocation>
</comment>
<comment type="similarity">
    <text evidence="1">Belongs to the RbsD / FucU family. FucU mutarotase subfamily.</text>
</comment>
<feature type="chain" id="PRO_1000187175" description="L-fucose mutarotase">
    <location>
        <begin position="1"/>
        <end position="140"/>
    </location>
</feature>
<feature type="active site" description="Proton donor" evidence="1">
    <location>
        <position position="22"/>
    </location>
</feature>
<feature type="binding site" evidence="1">
    <location>
        <position position="30"/>
    </location>
    <ligand>
        <name>substrate</name>
    </ligand>
</feature>
<feature type="binding site" evidence="1">
    <location>
        <position position="107"/>
    </location>
    <ligand>
        <name>substrate</name>
    </ligand>
</feature>
<feature type="binding site" evidence="1">
    <location>
        <begin position="129"/>
        <end position="131"/>
    </location>
    <ligand>
        <name>substrate</name>
    </ligand>
</feature>
<keyword id="KW-0119">Carbohydrate metabolism</keyword>
<keyword id="KW-0963">Cytoplasm</keyword>
<keyword id="KW-0294">Fucose metabolism</keyword>
<keyword id="KW-0413">Isomerase</keyword>
<keyword id="KW-1185">Reference proteome</keyword>
<organism>
    <name type="scientific">Escherichia coli O127:H6 (strain E2348/69 / EPEC)</name>
    <dbReference type="NCBI Taxonomy" id="574521"/>
    <lineage>
        <taxon>Bacteria</taxon>
        <taxon>Pseudomonadati</taxon>
        <taxon>Pseudomonadota</taxon>
        <taxon>Gammaproteobacteria</taxon>
        <taxon>Enterobacterales</taxon>
        <taxon>Enterobacteriaceae</taxon>
        <taxon>Escherichia</taxon>
    </lineage>
</organism>
<evidence type="ECO:0000255" key="1">
    <source>
        <dbReference type="HAMAP-Rule" id="MF_01662"/>
    </source>
</evidence>
<dbReference type="EC" id="5.1.3.29" evidence="1"/>
<dbReference type="EMBL" id="FM180568">
    <property type="protein sequence ID" value="CAS10619.1"/>
    <property type="molecule type" value="Genomic_DNA"/>
</dbReference>
<dbReference type="RefSeq" id="WP_000920840.1">
    <property type="nucleotide sequence ID" value="NC_011601.1"/>
</dbReference>
<dbReference type="SMR" id="B7UHM0"/>
<dbReference type="GeneID" id="93779194"/>
<dbReference type="KEGG" id="ecg:E2348C_3071"/>
<dbReference type="HOGENOM" id="CLU_120075_1_0_6"/>
<dbReference type="UniPathway" id="UPA00956"/>
<dbReference type="Proteomes" id="UP000008205">
    <property type="component" value="Chromosome"/>
</dbReference>
<dbReference type="GO" id="GO:0005737">
    <property type="term" value="C:cytoplasm"/>
    <property type="evidence" value="ECO:0007669"/>
    <property type="project" value="UniProtKB-SubCell"/>
</dbReference>
<dbReference type="GO" id="GO:0042806">
    <property type="term" value="F:fucose binding"/>
    <property type="evidence" value="ECO:0007669"/>
    <property type="project" value="InterPro"/>
</dbReference>
<dbReference type="GO" id="GO:0036373">
    <property type="term" value="F:L-fucose mutarotase activity"/>
    <property type="evidence" value="ECO:0007669"/>
    <property type="project" value="UniProtKB-EC"/>
</dbReference>
<dbReference type="GO" id="GO:0036065">
    <property type="term" value="P:fucosylation"/>
    <property type="evidence" value="ECO:0007669"/>
    <property type="project" value="TreeGrafter"/>
</dbReference>
<dbReference type="GO" id="GO:0042354">
    <property type="term" value="P:L-fucose metabolic process"/>
    <property type="evidence" value="ECO:0007669"/>
    <property type="project" value="UniProtKB-UniRule"/>
</dbReference>
<dbReference type="FunFam" id="3.40.1650.10:FF:000001">
    <property type="entry name" value="L-fucose mutarotase"/>
    <property type="match status" value="1"/>
</dbReference>
<dbReference type="Gene3D" id="3.40.1650.10">
    <property type="entry name" value="RbsD-like domain"/>
    <property type="match status" value="1"/>
</dbReference>
<dbReference type="HAMAP" id="MF_01662">
    <property type="entry name" value="L_fucose_rotase"/>
    <property type="match status" value="1"/>
</dbReference>
<dbReference type="InterPro" id="IPR023751">
    <property type="entry name" value="L-fucose_mutarotase"/>
</dbReference>
<dbReference type="InterPro" id="IPR023750">
    <property type="entry name" value="RbsD-like_sf"/>
</dbReference>
<dbReference type="InterPro" id="IPR050443">
    <property type="entry name" value="RbsD/FucU_mutarotase"/>
</dbReference>
<dbReference type="InterPro" id="IPR007721">
    <property type="entry name" value="RbsD_FucU"/>
</dbReference>
<dbReference type="NCBIfam" id="NF011949">
    <property type="entry name" value="PRK15420.1"/>
    <property type="match status" value="1"/>
</dbReference>
<dbReference type="PANTHER" id="PTHR31690">
    <property type="entry name" value="FUCOSE MUTAROTASE"/>
    <property type="match status" value="1"/>
</dbReference>
<dbReference type="PANTHER" id="PTHR31690:SF4">
    <property type="entry name" value="FUCOSE MUTAROTASE"/>
    <property type="match status" value="1"/>
</dbReference>
<dbReference type="Pfam" id="PF05025">
    <property type="entry name" value="RbsD_FucU"/>
    <property type="match status" value="1"/>
</dbReference>
<dbReference type="SUPFAM" id="SSF102546">
    <property type="entry name" value="RbsD-like"/>
    <property type="match status" value="1"/>
</dbReference>
<proteinExistence type="inferred from homology"/>
<name>FUCM_ECO27</name>
<reference key="1">
    <citation type="journal article" date="2009" name="J. Bacteriol.">
        <title>Complete genome sequence and comparative genome analysis of enteropathogenic Escherichia coli O127:H6 strain E2348/69.</title>
        <authorList>
            <person name="Iguchi A."/>
            <person name="Thomson N.R."/>
            <person name="Ogura Y."/>
            <person name="Saunders D."/>
            <person name="Ooka T."/>
            <person name="Henderson I.R."/>
            <person name="Harris D."/>
            <person name="Asadulghani M."/>
            <person name="Kurokawa K."/>
            <person name="Dean P."/>
            <person name="Kenny B."/>
            <person name="Quail M.A."/>
            <person name="Thurston S."/>
            <person name="Dougan G."/>
            <person name="Hayashi T."/>
            <person name="Parkhill J."/>
            <person name="Frankel G."/>
        </authorList>
    </citation>
    <scope>NUCLEOTIDE SEQUENCE [LARGE SCALE GENOMIC DNA]</scope>
    <source>
        <strain>E2348/69 / EPEC</strain>
    </source>
</reference>
<gene>
    <name evidence="1" type="primary">fucU</name>
    <name type="ordered locus">E2348C_3071</name>
</gene>